<organism>
    <name type="scientific">Vibrio cholerae serotype O1 (strain ATCC 39541 / Classical Ogawa 395 / O395)</name>
    <dbReference type="NCBI Taxonomy" id="345073"/>
    <lineage>
        <taxon>Bacteria</taxon>
        <taxon>Pseudomonadati</taxon>
        <taxon>Pseudomonadota</taxon>
        <taxon>Gammaproteobacteria</taxon>
        <taxon>Vibrionales</taxon>
        <taxon>Vibrionaceae</taxon>
        <taxon>Vibrio</taxon>
    </lineage>
</organism>
<keyword id="KW-0067">ATP-binding</keyword>
<keyword id="KW-0119">Carbohydrate metabolism</keyword>
<keyword id="KW-0418">Kinase</keyword>
<keyword id="KW-0511">Multifunctional enzyme</keyword>
<keyword id="KW-0547">Nucleotide-binding</keyword>
<keyword id="KW-0548">Nucleotidyltransferase</keyword>
<keyword id="KW-0808">Transferase</keyword>
<reference key="1">
    <citation type="submission" date="2007-03" db="EMBL/GenBank/DDBJ databases">
        <authorList>
            <person name="Heidelberg J."/>
        </authorList>
    </citation>
    <scope>NUCLEOTIDE SEQUENCE [LARGE SCALE GENOMIC DNA]</scope>
    <source>
        <strain>ATCC 39541 / Classical Ogawa 395 / O395</strain>
    </source>
</reference>
<reference key="2">
    <citation type="journal article" date="2008" name="PLoS ONE">
        <title>A recalibrated molecular clock and independent origins for the cholera pandemic clones.</title>
        <authorList>
            <person name="Feng L."/>
            <person name="Reeves P.R."/>
            <person name="Lan R."/>
            <person name="Ren Y."/>
            <person name="Gao C."/>
            <person name="Zhou Z."/>
            <person name="Ren Y."/>
            <person name="Cheng J."/>
            <person name="Wang W."/>
            <person name="Wang J."/>
            <person name="Qian W."/>
            <person name="Li D."/>
            <person name="Wang L."/>
        </authorList>
    </citation>
    <scope>NUCLEOTIDE SEQUENCE [LARGE SCALE GENOMIC DNA]</scope>
    <source>
        <strain>ATCC 39541 / Classical Ogawa 395 / O395</strain>
    </source>
</reference>
<proteinExistence type="inferred from homology"/>
<feature type="chain" id="PRO_0000323494" description="Bifunctional protein HldE">
    <location>
        <begin position="1"/>
        <end position="476"/>
    </location>
</feature>
<feature type="region of interest" description="Ribokinase">
    <location>
        <begin position="1"/>
        <end position="318"/>
    </location>
</feature>
<feature type="region of interest" description="Cytidylyltransferase">
    <location>
        <begin position="344"/>
        <end position="476"/>
    </location>
</feature>
<feature type="active site" evidence="1">
    <location>
        <position position="264"/>
    </location>
</feature>
<feature type="binding site" evidence="1">
    <location>
        <begin position="195"/>
        <end position="198"/>
    </location>
    <ligand>
        <name>ATP</name>
        <dbReference type="ChEBI" id="CHEBI:30616"/>
    </ligand>
</feature>
<name>HLDE_VIBC3</name>
<gene>
    <name evidence="1" type="primary">hldE</name>
    <name type="ordered locus">VC0395_A2014</name>
    <name type="ordered locus">VC395_2552</name>
</gene>
<comment type="function">
    <text evidence="1">Catalyzes the phosphorylation of D-glycero-D-manno-heptose 7-phosphate at the C-1 position to selectively form D-glycero-beta-D-manno-heptose-1,7-bisphosphate.</text>
</comment>
<comment type="function">
    <text evidence="1">Catalyzes the ADP transfer from ATP to D-glycero-beta-D-manno-heptose 1-phosphate, yielding ADP-D-glycero-beta-D-manno-heptose.</text>
</comment>
<comment type="catalytic activity">
    <reaction evidence="1">
        <text>D-glycero-beta-D-manno-heptose 7-phosphate + ATP = D-glycero-beta-D-manno-heptose 1,7-bisphosphate + ADP + H(+)</text>
        <dbReference type="Rhea" id="RHEA:27473"/>
        <dbReference type="ChEBI" id="CHEBI:15378"/>
        <dbReference type="ChEBI" id="CHEBI:30616"/>
        <dbReference type="ChEBI" id="CHEBI:60204"/>
        <dbReference type="ChEBI" id="CHEBI:60208"/>
        <dbReference type="ChEBI" id="CHEBI:456216"/>
        <dbReference type="EC" id="2.7.1.167"/>
    </reaction>
</comment>
<comment type="catalytic activity">
    <reaction evidence="1">
        <text>D-glycero-beta-D-manno-heptose 1-phosphate + ATP + H(+) = ADP-D-glycero-beta-D-manno-heptose + diphosphate</text>
        <dbReference type="Rhea" id="RHEA:27465"/>
        <dbReference type="ChEBI" id="CHEBI:15378"/>
        <dbReference type="ChEBI" id="CHEBI:30616"/>
        <dbReference type="ChEBI" id="CHEBI:33019"/>
        <dbReference type="ChEBI" id="CHEBI:59967"/>
        <dbReference type="ChEBI" id="CHEBI:61593"/>
        <dbReference type="EC" id="2.7.7.70"/>
    </reaction>
</comment>
<comment type="pathway">
    <text evidence="1">Nucleotide-sugar biosynthesis; ADP-L-glycero-beta-D-manno-heptose biosynthesis; ADP-L-glycero-beta-D-manno-heptose from D-glycero-beta-D-manno-heptose 7-phosphate: step 1/4.</text>
</comment>
<comment type="pathway">
    <text evidence="1">Nucleotide-sugar biosynthesis; ADP-L-glycero-beta-D-manno-heptose biosynthesis; ADP-L-glycero-beta-D-manno-heptose from D-glycero-beta-D-manno-heptose 7-phosphate: step 3/4.</text>
</comment>
<comment type="subunit">
    <text evidence="1">Homodimer.</text>
</comment>
<comment type="similarity">
    <text evidence="1">In the N-terminal section; belongs to the carbohydrate kinase PfkB family.</text>
</comment>
<comment type="similarity">
    <text evidence="1">In the C-terminal section; belongs to the cytidylyltransferase family.</text>
</comment>
<evidence type="ECO:0000255" key="1">
    <source>
        <dbReference type="HAMAP-Rule" id="MF_01603"/>
    </source>
</evidence>
<accession>A5F5J2</accession>
<accession>C3M4S8</accession>
<sequence>MKPVLPDYSKAGVLIVGDVMLDRYWYGPTGRISPEAPVPVVKVEQSEERPGGAANVAMNIASLGGHAHIIGLTGQDEPANVLANKLTSLKVHCDFVALPDYPTITKLRVLSRGQQLIRLDFEDKFENTDAQLILSRMESALPKVRAVILSDYAKGALEHVQQFIQKAKAAGVPVFIDPKGSDFERYRGASLLTPNMSEFEAVVGKVKSEQELVEKGFALIEKFDLGALLVTRSEHGMTLLRRGLEPFHLPTQAKEVYDVTGAGDTVISVLAASVAAGKALDEACALANAAAGVVVGKLGTSTVSTIELAEAVHGSKDTDYGVISEDALIEAVKKAQARGEKVVMTNGCFDILHAGHVSYLNHAAELGDRLIVAVNTDESVKRLKGPGRPVNSTDRRMAVLAGLGAVDWVVPFSEDTPQRLIAAILPNLLVKGGDYKPEEIAGGKEVIAAGGEVKVLNFEEGCSTTEIIEAIKGGRG</sequence>
<protein>
    <recommendedName>
        <fullName evidence="1">Bifunctional protein HldE</fullName>
    </recommendedName>
    <domain>
        <recommendedName>
            <fullName evidence="1">D-beta-D-heptose 7-phosphate kinase</fullName>
            <ecNumber evidence="1">2.7.1.167</ecNumber>
        </recommendedName>
        <alternativeName>
            <fullName evidence="1">D-beta-D-heptose 7-phosphotransferase</fullName>
        </alternativeName>
        <alternativeName>
            <fullName evidence="1">D-glycero-beta-D-manno-heptose-7-phosphate kinase</fullName>
        </alternativeName>
    </domain>
    <domain>
        <recommendedName>
            <fullName evidence="1">D-beta-D-heptose 1-phosphate adenylyltransferase</fullName>
            <ecNumber evidence="1">2.7.7.70</ecNumber>
        </recommendedName>
        <alternativeName>
            <fullName evidence="1">D-glycero-beta-D-manno-heptose 1-phosphate adenylyltransferase</fullName>
        </alternativeName>
    </domain>
</protein>
<dbReference type="EC" id="2.7.1.167" evidence="1"/>
<dbReference type="EC" id="2.7.7.70" evidence="1"/>
<dbReference type="EMBL" id="CP000627">
    <property type="protein sequence ID" value="ABQ21105.1"/>
    <property type="molecule type" value="Genomic_DNA"/>
</dbReference>
<dbReference type="EMBL" id="CP001235">
    <property type="protein sequence ID" value="ACP10539.1"/>
    <property type="molecule type" value="Genomic_DNA"/>
</dbReference>
<dbReference type="RefSeq" id="WP_000805768.1">
    <property type="nucleotide sequence ID" value="NZ_JAACZH010000010.1"/>
</dbReference>
<dbReference type="SMR" id="A5F5J2"/>
<dbReference type="KEGG" id="vco:VC0395_A2014"/>
<dbReference type="KEGG" id="vcr:VC395_2552"/>
<dbReference type="PATRIC" id="fig|345073.21.peg.2455"/>
<dbReference type="eggNOG" id="COG0615">
    <property type="taxonomic scope" value="Bacteria"/>
</dbReference>
<dbReference type="eggNOG" id="COG2870">
    <property type="taxonomic scope" value="Bacteria"/>
</dbReference>
<dbReference type="HOGENOM" id="CLU_021150_2_1_6"/>
<dbReference type="OrthoDB" id="9802794at2"/>
<dbReference type="UniPathway" id="UPA00356">
    <property type="reaction ID" value="UER00437"/>
</dbReference>
<dbReference type="UniPathway" id="UPA00356">
    <property type="reaction ID" value="UER00439"/>
</dbReference>
<dbReference type="Proteomes" id="UP000000249">
    <property type="component" value="Chromosome 2"/>
</dbReference>
<dbReference type="GO" id="GO:0005829">
    <property type="term" value="C:cytosol"/>
    <property type="evidence" value="ECO:0007669"/>
    <property type="project" value="TreeGrafter"/>
</dbReference>
<dbReference type="GO" id="GO:0005524">
    <property type="term" value="F:ATP binding"/>
    <property type="evidence" value="ECO:0007669"/>
    <property type="project" value="UniProtKB-UniRule"/>
</dbReference>
<dbReference type="GO" id="GO:0033785">
    <property type="term" value="F:heptose 7-phosphate kinase activity"/>
    <property type="evidence" value="ECO:0007669"/>
    <property type="project" value="UniProtKB-UniRule"/>
</dbReference>
<dbReference type="GO" id="GO:0033786">
    <property type="term" value="F:heptose-1-phosphate adenylyltransferase activity"/>
    <property type="evidence" value="ECO:0007669"/>
    <property type="project" value="UniProtKB-UniRule"/>
</dbReference>
<dbReference type="GO" id="GO:0016773">
    <property type="term" value="F:phosphotransferase activity, alcohol group as acceptor"/>
    <property type="evidence" value="ECO:0007669"/>
    <property type="project" value="InterPro"/>
</dbReference>
<dbReference type="GO" id="GO:0097171">
    <property type="term" value="P:ADP-L-glycero-beta-D-manno-heptose biosynthetic process"/>
    <property type="evidence" value="ECO:0007669"/>
    <property type="project" value="UniProtKB-UniPathway"/>
</dbReference>
<dbReference type="CDD" id="cd01172">
    <property type="entry name" value="RfaE_like"/>
    <property type="match status" value="1"/>
</dbReference>
<dbReference type="FunFam" id="3.40.1190.20:FF:000002">
    <property type="entry name" value="Bifunctional protein HldE"/>
    <property type="match status" value="1"/>
</dbReference>
<dbReference type="FunFam" id="3.40.50.620:FF:000028">
    <property type="entry name" value="Bifunctional protein HldE"/>
    <property type="match status" value="1"/>
</dbReference>
<dbReference type="Gene3D" id="3.40.1190.20">
    <property type="match status" value="1"/>
</dbReference>
<dbReference type="Gene3D" id="3.40.50.620">
    <property type="entry name" value="HUPs"/>
    <property type="match status" value="1"/>
</dbReference>
<dbReference type="HAMAP" id="MF_01603">
    <property type="entry name" value="HldE"/>
    <property type="match status" value="1"/>
</dbReference>
<dbReference type="InterPro" id="IPR023030">
    <property type="entry name" value="Bifunc_HldE"/>
</dbReference>
<dbReference type="InterPro" id="IPR002173">
    <property type="entry name" value="Carboh/pur_kinase_PfkB_CS"/>
</dbReference>
<dbReference type="InterPro" id="IPR004821">
    <property type="entry name" value="Cyt_trans-like"/>
</dbReference>
<dbReference type="InterPro" id="IPR011611">
    <property type="entry name" value="PfkB_dom"/>
</dbReference>
<dbReference type="InterPro" id="IPR011913">
    <property type="entry name" value="RfaE_dom_I"/>
</dbReference>
<dbReference type="InterPro" id="IPR011914">
    <property type="entry name" value="RfaE_dom_II"/>
</dbReference>
<dbReference type="InterPro" id="IPR029056">
    <property type="entry name" value="Ribokinase-like"/>
</dbReference>
<dbReference type="InterPro" id="IPR014729">
    <property type="entry name" value="Rossmann-like_a/b/a_fold"/>
</dbReference>
<dbReference type="NCBIfam" id="TIGR00125">
    <property type="entry name" value="cyt_tran_rel"/>
    <property type="match status" value="1"/>
</dbReference>
<dbReference type="NCBIfam" id="NF008454">
    <property type="entry name" value="PRK11316.1"/>
    <property type="match status" value="1"/>
</dbReference>
<dbReference type="NCBIfam" id="TIGR02198">
    <property type="entry name" value="rfaE_dom_I"/>
    <property type="match status" value="1"/>
</dbReference>
<dbReference type="NCBIfam" id="TIGR02199">
    <property type="entry name" value="rfaE_dom_II"/>
    <property type="match status" value="1"/>
</dbReference>
<dbReference type="PANTHER" id="PTHR46969">
    <property type="entry name" value="BIFUNCTIONAL PROTEIN HLDE"/>
    <property type="match status" value="1"/>
</dbReference>
<dbReference type="PANTHER" id="PTHR46969:SF1">
    <property type="entry name" value="BIFUNCTIONAL PROTEIN HLDE"/>
    <property type="match status" value="1"/>
</dbReference>
<dbReference type="Pfam" id="PF01467">
    <property type="entry name" value="CTP_transf_like"/>
    <property type="match status" value="1"/>
</dbReference>
<dbReference type="Pfam" id="PF00294">
    <property type="entry name" value="PfkB"/>
    <property type="match status" value="1"/>
</dbReference>
<dbReference type="SUPFAM" id="SSF52374">
    <property type="entry name" value="Nucleotidylyl transferase"/>
    <property type="match status" value="1"/>
</dbReference>
<dbReference type="SUPFAM" id="SSF53613">
    <property type="entry name" value="Ribokinase-like"/>
    <property type="match status" value="1"/>
</dbReference>
<dbReference type="PROSITE" id="PS00583">
    <property type="entry name" value="PFKB_KINASES_1"/>
    <property type="match status" value="1"/>
</dbReference>